<protein>
    <recommendedName>
        <fullName evidence="1">Urease accessory protein UreD</fullName>
    </recommendedName>
</protein>
<gene>
    <name evidence="1" type="primary">ureD</name>
    <name type="ordered locus">Pfl01_0585</name>
</gene>
<organism>
    <name type="scientific">Pseudomonas fluorescens (strain Pf0-1)</name>
    <dbReference type="NCBI Taxonomy" id="205922"/>
    <lineage>
        <taxon>Bacteria</taxon>
        <taxon>Pseudomonadati</taxon>
        <taxon>Pseudomonadota</taxon>
        <taxon>Gammaproteobacteria</taxon>
        <taxon>Pseudomonadales</taxon>
        <taxon>Pseudomonadaceae</taxon>
        <taxon>Pseudomonas</taxon>
    </lineage>
</organism>
<accession>Q3KIS7</accession>
<reference key="1">
    <citation type="journal article" date="2009" name="Genome Biol.">
        <title>Genomic and genetic analyses of diversity and plant interactions of Pseudomonas fluorescens.</title>
        <authorList>
            <person name="Silby M.W."/>
            <person name="Cerdeno-Tarraga A.M."/>
            <person name="Vernikos G.S."/>
            <person name="Giddens S.R."/>
            <person name="Jackson R.W."/>
            <person name="Preston G.M."/>
            <person name="Zhang X.-X."/>
            <person name="Moon C.D."/>
            <person name="Gehrig S.M."/>
            <person name="Godfrey S.A.C."/>
            <person name="Knight C.G."/>
            <person name="Malone J.G."/>
            <person name="Robinson Z."/>
            <person name="Spiers A.J."/>
            <person name="Harris S."/>
            <person name="Challis G.L."/>
            <person name="Yaxley A.M."/>
            <person name="Harris D."/>
            <person name="Seeger K."/>
            <person name="Murphy L."/>
            <person name="Rutter S."/>
            <person name="Squares R."/>
            <person name="Quail M.A."/>
            <person name="Saunders E."/>
            <person name="Mavromatis K."/>
            <person name="Brettin T.S."/>
            <person name="Bentley S.D."/>
            <person name="Hothersall J."/>
            <person name="Stephens E."/>
            <person name="Thomas C.M."/>
            <person name="Parkhill J."/>
            <person name="Levy S.B."/>
            <person name="Rainey P.B."/>
            <person name="Thomson N.R."/>
        </authorList>
    </citation>
    <scope>NUCLEOTIDE SEQUENCE [LARGE SCALE GENOMIC DNA]</scope>
    <source>
        <strain>Pf0-1</strain>
    </source>
</reference>
<keyword id="KW-0143">Chaperone</keyword>
<keyword id="KW-0963">Cytoplasm</keyword>
<keyword id="KW-0996">Nickel insertion</keyword>
<name>URED_PSEPF</name>
<proteinExistence type="inferred from homology"/>
<dbReference type="EMBL" id="CP000094">
    <property type="protein sequence ID" value="ABA72329.1"/>
    <property type="molecule type" value="Genomic_DNA"/>
</dbReference>
<dbReference type="RefSeq" id="WP_011332235.1">
    <property type="nucleotide sequence ID" value="NC_007492.2"/>
</dbReference>
<dbReference type="SMR" id="Q3KIS7"/>
<dbReference type="KEGG" id="pfo:Pfl01_0585"/>
<dbReference type="eggNOG" id="COG0829">
    <property type="taxonomic scope" value="Bacteria"/>
</dbReference>
<dbReference type="HOGENOM" id="CLU_056339_0_0_6"/>
<dbReference type="Proteomes" id="UP000002704">
    <property type="component" value="Chromosome"/>
</dbReference>
<dbReference type="GO" id="GO:0005737">
    <property type="term" value="C:cytoplasm"/>
    <property type="evidence" value="ECO:0007669"/>
    <property type="project" value="UniProtKB-SubCell"/>
</dbReference>
<dbReference type="GO" id="GO:0016151">
    <property type="term" value="F:nickel cation binding"/>
    <property type="evidence" value="ECO:0007669"/>
    <property type="project" value="UniProtKB-UniRule"/>
</dbReference>
<dbReference type="HAMAP" id="MF_01384">
    <property type="entry name" value="UreD"/>
    <property type="match status" value="1"/>
</dbReference>
<dbReference type="InterPro" id="IPR002669">
    <property type="entry name" value="UreD"/>
</dbReference>
<dbReference type="PANTHER" id="PTHR33643">
    <property type="entry name" value="UREASE ACCESSORY PROTEIN D"/>
    <property type="match status" value="1"/>
</dbReference>
<dbReference type="PANTHER" id="PTHR33643:SF1">
    <property type="entry name" value="UREASE ACCESSORY PROTEIN D"/>
    <property type="match status" value="1"/>
</dbReference>
<dbReference type="Pfam" id="PF01774">
    <property type="entry name" value="UreD"/>
    <property type="match status" value="1"/>
</dbReference>
<feature type="chain" id="PRO_0000340487" description="Urease accessory protein UreD">
    <location>
        <begin position="1"/>
        <end position="279"/>
    </location>
</feature>
<evidence type="ECO:0000255" key="1">
    <source>
        <dbReference type="HAMAP-Rule" id="MF_01384"/>
    </source>
</evidence>
<comment type="function">
    <text evidence="1">Required for maturation of urease via the functional incorporation of the urease nickel metallocenter.</text>
</comment>
<comment type="subunit">
    <text evidence="1">UreD, UreF and UreG form a complex that acts as a GTP-hydrolysis-dependent molecular chaperone, activating the urease apoprotein by helping to assemble the nickel containing metallocenter of UreC. The UreE protein probably delivers the nickel.</text>
</comment>
<comment type="subcellular location">
    <subcellularLocation>
        <location evidence="1">Cytoplasm</location>
    </subcellularLocation>
</comment>
<comment type="similarity">
    <text evidence="1">Belongs to the UreD family.</text>
</comment>
<sequence>MNLPVATALFTPSWHAELELAYARFGDCTRPTRRRHLGPLRVQKHLYAEGPEVCQHIIVHPPGGIAGGDRLDISARVAQGAWAQITSPGAAKWYRAAGPAYQSLNLHVADGATLEWLPQETIVYSAAQAELTTSIELEGDARLFYWDVVALGRPASGERFDLGHFQAHLDIRRDGRLLWHERQRIVGADGLLDSPIGLDGHPVFATLLVTGEIDAELLERCRSLGHEVRGDLTQLPGLLVARCLASEALLARAWLIDLWRLLRPALLGREALPPRIWNT</sequence>